<organism>
    <name type="scientific">Salmonella paratyphi B (strain ATCC BAA-1250 / SPB7)</name>
    <dbReference type="NCBI Taxonomy" id="1016998"/>
    <lineage>
        <taxon>Bacteria</taxon>
        <taxon>Pseudomonadati</taxon>
        <taxon>Pseudomonadota</taxon>
        <taxon>Gammaproteobacteria</taxon>
        <taxon>Enterobacterales</taxon>
        <taxon>Enterobacteriaceae</taxon>
        <taxon>Salmonella</taxon>
    </lineage>
</organism>
<feature type="chain" id="PRO_0000384765" description="Ribosome maturation factor RimP">
    <location>
        <begin position="1"/>
        <end position="152"/>
    </location>
</feature>
<protein>
    <recommendedName>
        <fullName evidence="1">Ribosome maturation factor RimP</fullName>
    </recommendedName>
</protein>
<reference key="1">
    <citation type="submission" date="2007-11" db="EMBL/GenBank/DDBJ databases">
        <authorList>
            <consortium name="The Salmonella enterica serovar Paratyphi B Genome Sequencing Project"/>
            <person name="McClelland M."/>
            <person name="Sanderson E.K."/>
            <person name="Porwollik S."/>
            <person name="Spieth J."/>
            <person name="Clifton W.S."/>
            <person name="Fulton R."/>
            <person name="Cordes M."/>
            <person name="Wollam A."/>
            <person name="Shah N."/>
            <person name="Pepin K."/>
            <person name="Bhonagiri V."/>
            <person name="Nash W."/>
            <person name="Johnson M."/>
            <person name="Thiruvilangam P."/>
            <person name="Wilson R."/>
        </authorList>
    </citation>
    <scope>NUCLEOTIDE SEQUENCE [LARGE SCALE GENOMIC DNA]</scope>
    <source>
        <strain>ATCC BAA-1250 / SPB7</strain>
    </source>
</reference>
<dbReference type="EMBL" id="CP000886">
    <property type="protein sequence ID" value="ABX69426.1"/>
    <property type="status" value="ALT_INIT"/>
    <property type="molecule type" value="Genomic_DNA"/>
</dbReference>
<dbReference type="SMR" id="A9N734"/>
<dbReference type="KEGG" id="spq:SPAB_04100"/>
<dbReference type="PATRIC" id="fig|1016998.12.peg.3863"/>
<dbReference type="HOGENOM" id="CLU_070525_1_1_6"/>
<dbReference type="Proteomes" id="UP000008556">
    <property type="component" value="Chromosome"/>
</dbReference>
<dbReference type="GO" id="GO:0005829">
    <property type="term" value="C:cytosol"/>
    <property type="evidence" value="ECO:0007669"/>
    <property type="project" value="TreeGrafter"/>
</dbReference>
<dbReference type="GO" id="GO:0000028">
    <property type="term" value="P:ribosomal small subunit assembly"/>
    <property type="evidence" value="ECO:0007669"/>
    <property type="project" value="TreeGrafter"/>
</dbReference>
<dbReference type="GO" id="GO:0006412">
    <property type="term" value="P:translation"/>
    <property type="evidence" value="ECO:0007669"/>
    <property type="project" value="TreeGrafter"/>
</dbReference>
<dbReference type="CDD" id="cd01734">
    <property type="entry name" value="YlxS_C"/>
    <property type="match status" value="1"/>
</dbReference>
<dbReference type="FunFam" id="2.30.30.180:FF:000001">
    <property type="entry name" value="Ribosome maturation factor RimP"/>
    <property type="match status" value="1"/>
</dbReference>
<dbReference type="FunFam" id="3.30.300.70:FF:000001">
    <property type="entry name" value="Ribosome maturation factor RimP"/>
    <property type="match status" value="1"/>
</dbReference>
<dbReference type="Gene3D" id="2.30.30.180">
    <property type="entry name" value="Ribosome maturation factor RimP, C-terminal domain"/>
    <property type="match status" value="1"/>
</dbReference>
<dbReference type="Gene3D" id="3.30.300.70">
    <property type="entry name" value="RimP-like superfamily, N-terminal"/>
    <property type="match status" value="1"/>
</dbReference>
<dbReference type="HAMAP" id="MF_01077">
    <property type="entry name" value="RimP"/>
    <property type="match status" value="1"/>
</dbReference>
<dbReference type="InterPro" id="IPR003728">
    <property type="entry name" value="Ribosome_maturation_RimP"/>
</dbReference>
<dbReference type="InterPro" id="IPR028998">
    <property type="entry name" value="RimP_C"/>
</dbReference>
<dbReference type="InterPro" id="IPR036847">
    <property type="entry name" value="RimP_C_sf"/>
</dbReference>
<dbReference type="InterPro" id="IPR028989">
    <property type="entry name" value="RimP_N"/>
</dbReference>
<dbReference type="InterPro" id="IPR035956">
    <property type="entry name" value="RimP_N_sf"/>
</dbReference>
<dbReference type="NCBIfam" id="NF000927">
    <property type="entry name" value="PRK00092.1-1"/>
    <property type="match status" value="1"/>
</dbReference>
<dbReference type="PANTHER" id="PTHR33867">
    <property type="entry name" value="RIBOSOME MATURATION FACTOR RIMP"/>
    <property type="match status" value="1"/>
</dbReference>
<dbReference type="PANTHER" id="PTHR33867:SF1">
    <property type="entry name" value="RIBOSOME MATURATION FACTOR RIMP"/>
    <property type="match status" value="1"/>
</dbReference>
<dbReference type="Pfam" id="PF17384">
    <property type="entry name" value="DUF150_C"/>
    <property type="match status" value="1"/>
</dbReference>
<dbReference type="Pfam" id="PF02576">
    <property type="entry name" value="RimP_N"/>
    <property type="match status" value="1"/>
</dbReference>
<dbReference type="SUPFAM" id="SSF74942">
    <property type="entry name" value="YhbC-like, C-terminal domain"/>
    <property type="match status" value="1"/>
</dbReference>
<dbReference type="SUPFAM" id="SSF75420">
    <property type="entry name" value="YhbC-like, N-terminal domain"/>
    <property type="match status" value="1"/>
</dbReference>
<gene>
    <name evidence="1" type="primary">rimP</name>
    <name type="ordered locus">SPAB_04100</name>
</gene>
<name>RIMP_SALPB</name>
<evidence type="ECO:0000255" key="1">
    <source>
        <dbReference type="HAMAP-Rule" id="MF_01077"/>
    </source>
</evidence>
<evidence type="ECO:0000305" key="2"/>
<keyword id="KW-0963">Cytoplasm</keyword>
<keyword id="KW-0690">Ribosome biogenesis</keyword>
<sequence length="152" mass="16840">MGLSTLEQKLTEMITAPVEALGYELVGIEFIRGRTSTLRIYIDSEDGINVDDCADVSHQVSAVLDVEDPISVAYNLEVSSPGLDRPMFTADHYARFQGEEVALVLRMAVQNRRKWQGIIKAVDGEMITVTVEGKDEVFALSNIQKANLVPHF</sequence>
<accession>A9N734</accession>
<proteinExistence type="inferred from homology"/>
<comment type="function">
    <text evidence="1">Required for maturation of 30S ribosomal subunits.</text>
</comment>
<comment type="subcellular location">
    <subcellularLocation>
        <location evidence="1">Cytoplasm</location>
    </subcellularLocation>
</comment>
<comment type="similarity">
    <text evidence="1">Belongs to the RimP family.</text>
</comment>
<comment type="sequence caution" evidence="2">
    <conflict type="erroneous initiation">
        <sequence resource="EMBL-CDS" id="ABX69426"/>
    </conflict>
</comment>